<feature type="chain" id="PRO_0000210096" description="Uncharacterized transporter YdhK">
    <location>
        <begin position="1"/>
        <end position="679"/>
    </location>
</feature>
<feature type="transmembrane region" description="Helical" evidence="1">
    <location>
        <begin position="23"/>
        <end position="41"/>
    </location>
</feature>
<feature type="transmembrane region" description="Helical" evidence="1">
    <location>
        <begin position="46"/>
        <end position="65"/>
    </location>
</feature>
<feature type="transmembrane region" description="Helical" evidence="1">
    <location>
        <begin position="72"/>
        <end position="90"/>
    </location>
</feature>
<feature type="transmembrane region" description="Helical" evidence="1">
    <location>
        <begin position="94"/>
        <end position="113"/>
    </location>
</feature>
<feature type="transmembrane region" description="Helical" evidence="1">
    <location>
        <begin position="120"/>
        <end position="142"/>
    </location>
</feature>
<feature type="transmembrane region" description="Helical" evidence="1">
    <location>
        <begin position="157"/>
        <end position="179"/>
    </location>
</feature>
<feature type="transmembrane region" description="Helical" evidence="1">
    <location>
        <begin position="362"/>
        <end position="381"/>
    </location>
</feature>
<feature type="transmembrane region" description="Helical" evidence="1">
    <location>
        <begin position="385"/>
        <end position="404"/>
    </location>
</feature>
<feature type="transmembrane region" description="Helical" evidence="1">
    <location>
        <begin position="411"/>
        <end position="433"/>
    </location>
</feature>
<feature type="transmembrane region" description="Helical" evidence="1">
    <location>
        <begin position="438"/>
        <end position="455"/>
    </location>
</feature>
<feature type="transmembrane region" description="Helical" evidence="1">
    <location>
        <begin position="462"/>
        <end position="481"/>
    </location>
</feature>
<feature type="transmembrane region" description="Helical" evidence="1">
    <location>
        <begin position="496"/>
        <end position="515"/>
    </location>
</feature>
<evidence type="ECO:0000255" key="1"/>
<evidence type="ECO:0000305" key="2"/>
<comment type="subcellular location">
    <subcellularLocation>
        <location evidence="2">Cell membrane</location>
        <topology evidence="2">Multi-pass membrane protein</topology>
    </subcellularLocation>
</comment>
<comment type="similarity">
    <text evidence="2">Belongs to the aromatic acid exporter ArAE (TC 2.A.85) family.</text>
</comment>
<dbReference type="EMBL" id="AE006468">
    <property type="protein sequence ID" value="AAL20363.1"/>
    <property type="molecule type" value="Genomic_DNA"/>
</dbReference>
<dbReference type="RefSeq" id="NP_460404.1">
    <property type="nucleotide sequence ID" value="NC_003197.2"/>
</dbReference>
<dbReference type="RefSeq" id="WP_000777608.1">
    <property type="nucleotide sequence ID" value="NC_003197.2"/>
</dbReference>
<dbReference type="STRING" id="99287.STM1441"/>
<dbReference type="TCDB" id="2.A.85.1.5">
    <property type="family name" value="the aromatic acid exporter (arae) family"/>
</dbReference>
<dbReference type="PaxDb" id="99287-STM1441"/>
<dbReference type="GeneID" id="1252959"/>
<dbReference type="KEGG" id="stm:STM1441"/>
<dbReference type="PATRIC" id="fig|99287.12.peg.1524"/>
<dbReference type="HOGENOM" id="CLU_013927_3_0_6"/>
<dbReference type="OMA" id="LNDPWLF"/>
<dbReference type="PhylomeDB" id="Q8ZPN4"/>
<dbReference type="BioCyc" id="SENT99287:STM1441-MONOMER"/>
<dbReference type="Proteomes" id="UP000001014">
    <property type="component" value="Chromosome"/>
</dbReference>
<dbReference type="GO" id="GO:0005886">
    <property type="term" value="C:plasma membrane"/>
    <property type="evidence" value="ECO:0000318"/>
    <property type="project" value="GO_Central"/>
</dbReference>
<dbReference type="GO" id="GO:0022857">
    <property type="term" value="F:transmembrane transporter activity"/>
    <property type="evidence" value="ECO:0007669"/>
    <property type="project" value="InterPro"/>
</dbReference>
<dbReference type="InterPro" id="IPR006726">
    <property type="entry name" value="PHBA_efflux_AaeB/fusaric-R"/>
</dbReference>
<dbReference type="PANTHER" id="PTHR30509:SF9">
    <property type="entry name" value="MULTIDRUG RESISTANCE PROTEIN MDTO"/>
    <property type="match status" value="1"/>
</dbReference>
<dbReference type="PANTHER" id="PTHR30509">
    <property type="entry name" value="P-HYDROXYBENZOIC ACID EFFLUX PUMP SUBUNIT-RELATED"/>
    <property type="match status" value="1"/>
</dbReference>
<dbReference type="Pfam" id="PF04632">
    <property type="entry name" value="FUSC"/>
    <property type="match status" value="1"/>
</dbReference>
<accession>Q8ZPN4</accession>
<gene>
    <name type="primary">ydhK</name>
    <name type="ordered locus">STM1441</name>
</gene>
<name>YDHK_SALTY</name>
<organism>
    <name type="scientific">Salmonella typhimurium (strain LT2 / SGSC1412 / ATCC 700720)</name>
    <dbReference type="NCBI Taxonomy" id="99287"/>
    <lineage>
        <taxon>Bacteria</taxon>
        <taxon>Pseudomonadati</taxon>
        <taxon>Pseudomonadota</taxon>
        <taxon>Gammaproteobacteria</taxon>
        <taxon>Enterobacterales</taxon>
        <taxon>Enterobacteriaceae</taxon>
        <taxon>Salmonella</taxon>
    </lineage>
</organism>
<protein>
    <recommendedName>
        <fullName>Uncharacterized transporter YdhK</fullName>
    </recommendedName>
</protein>
<keyword id="KW-1003">Cell membrane</keyword>
<keyword id="KW-0472">Membrane</keyword>
<keyword id="KW-1185">Reference proteome</keyword>
<keyword id="KW-0812">Transmembrane</keyword>
<keyword id="KW-1133">Transmembrane helix</keyword>
<keyword id="KW-0813">Transport</keyword>
<proteinExistence type="inferred from homology"/>
<sequence>MKLSLPALRNTPWFKATSGQWRYALRNTIAMCLALTFAYYLNLDEPYWAMTSAAVVSFPTVGGVISKSLGRIAGSLLGATAALIIAGHTLNEPWLFLFSMAAWIGFCTWACAHFTNNAAYAFQLSGYTAAIIAFPMVNIVEITQLWDIAQARVCEVIVGILCGGMMMMILPSTSDGTALLTAFKNMHARLLEHASLLWQPETTDAIRSAHEGVIGQILTMNLLRIQAFWSHYRFRRQNALLNALLHQQLRLTSVISSLRRMLLNWPTPPENSREVIEQLLAELAKPRADSYTVAQIIAPLRPQDEQDYRHLAFWQRLRYFCQLYLRSSRQLYLIESGAPVDQIHIRRTPGLARHTDNAEAIWSGVRTFCTLTVIGAWSIGAQWESGPGALTLAAISCVLYSIVATPFKSLSLLMRTLVLLSLFSFVVKFGLMVQITDLWQFLLFLFPLFVTMQLLKLQMPKLAGLWGQLIVFMGSFIAVTNPPVYDFADFLNDNTAKIVGVAISWLAFAILRPGSDAVKSRRHIRALRRDFVDQLSRHPSHNESEFESLTYHHVSQLSNSQDALARRWLLRWGVVLLNCSHVVWQLRAWESRSDPLSRVRDICISLLRDVMSERGVQQRPLAVTLQELQRICDTLAHHHQPAAHELAAIIWRLHCSLSQLEQAPAQGTLAPGYLMTPQA</sequence>
<reference key="1">
    <citation type="journal article" date="2001" name="Nature">
        <title>Complete genome sequence of Salmonella enterica serovar Typhimurium LT2.</title>
        <authorList>
            <person name="McClelland M."/>
            <person name="Sanderson K.E."/>
            <person name="Spieth J."/>
            <person name="Clifton S.W."/>
            <person name="Latreille P."/>
            <person name="Courtney L."/>
            <person name="Porwollik S."/>
            <person name="Ali J."/>
            <person name="Dante M."/>
            <person name="Du F."/>
            <person name="Hou S."/>
            <person name="Layman D."/>
            <person name="Leonard S."/>
            <person name="Nguyen C."/>
            <person name="Scott K."/>
            <person name="Holmes A."/>
            <person name="Grewal N."/>
            <person name="Mulvaney E."/>
            <person name="Ryan E."/>
            <person name="Sun H."/>
            <person name="Florea L."/>
            <person name="Miller W."/>
            <person name="Stoneking T."/>
            <person name="Nhan M."/>
            <person name="Waterston R."/>
            <person name="Wilson R.K."/>
        </authorList>
    </citation>
    <scope>NUCLEOTIDE SEQUENCE [LARGE SCALE GENOMIC DNA]</scope>
    <source>
        <strain>LT2 / SGSC1412 / ATCC 700720</strain>
    </source>
</reference>